<feature type="chain" id="PRO_1000146656" description="Sulfite reductase [NADPH] hemoprotein beta-component">
    <location>
        <begin position="1"/>
        <end position="570"/>
    </location>
</feature>
<feature type="binding site" evidence="1">
    <location>
        <position position="434"/>
    </location>
    <ligand>
        <name>[4Fe-4S] cluster</name>
        <dbReference type="ChEBI" id="CHEBI:49883"/>
    </ligand>
</feature>
<feature type="binding site" evidence="1">
    <location>
        <position position="440"/>
    </location>
    <ligand>
        <name>[4Fe-4S] cluster</name>
        <dbReference type="ChEBI" id="CHEBI:49883"/>
    </ligand>
</feature>
<feature type="binding site" evidence="1">
    <location>
        <position position="479"/>
    </location>
    <ligand>
        <name>[4Fe-4S] cluster</name>
        <dbReference type="ChEBI" id="CHEBI:49883"/>
    </ligand>
</feature>
<feature type="binding site" evidence="1">
    <location>
        <position position="483"/>
    </location>
    <ligand>
        <name>[4Fe-4S] cluster</name>
        <dbReference type="ChEBI" id="CHEBI:49883"/>
    </ligand>
</feature>
<feature type="binding site" description="axial binding residue" evidence="1">
    <location>
        <position position="483"/>
    </location>
    <ligand>
        <name>siroheme</name>
        <dbReference type="ChEBI" id="CHEBI:60052"/>
    </ligand>
    <ligandPart>
        <name>Fe</name>
        <dbReference type="ChEBI" id="CHEBI:18248"/>
    </ligandPart>
</feature>
<gene>
    <name evidence="1" type="primary">cysI</name>
    <name type="ordered locus">SG2850</name>
</gene>
<dbReference type="EC" id="1.8.1.2" evidence="1"/>
<dbReference type="EMBL" id="AM933173">
    <property type="protein sequence ID" value="CAR38658.1"/>
    <property type="molecule type" value="Genomic_DNA"/>
</dbReference>
<dbReference type="RefSeq" id="WP_001290671.1">
    <property type="nucleotide sequence ID" value="NC_011274.1"/>
</dbReference>
<dbReference type="SMR" id="B5RDS0"/>
<dbReference type="KEGG" id="seg:SG2850"/>
<dbReference type="HOGENOM" id="CLU_001975_3_2_6"/>
<dbReference type="UniPathway" id="UPA00140">
    <property type="reaction ID" value="UER00207"/>
</dbReference>
<dbReference type="Proteomes" id="UP000008321">
    <property type="component" value="Chromosome"/>
</dbReference>
<dbReference type="GO" id="GO:0009337">
    <property type="term" value="C:sulfite reductase complex (NADPH)"/>
    <property type="evidence" value="ECO:0007669"/>
    <property type="project" value="InterPro"/>
</dbReference>
<dbReference type="GO" id="GO:0051539">
    <property type="term" value="F:4 iron, 4 sulfur cluster binding"/>
    <property type="evidence" value="ECO:0007669"/>
    <property type="project" value="UniProtKB-KW"/>
</dbReference>
<dbReference type="GO" id="GO:0020037">
    <property type="term" value="F:heme binding"/>
    <property type="evidence" value="ECO:0007669"/>
    <property type="project" value="InterPro"/>
</dbReference>
<dbReference type="GO" id="GO:0046872">
    <property type="term" value="F:metal ion binding"/>
    <property type="evidence" value="ECO:0007669"/>
    <property type="project" value="UniProtKB-KW"/>
</dbReference>
<dbReference type="GO" id="GO:0050661">
    <property type="term" value="F:NADP binding"/>
    <property type="evidence" value="ECO:0007669"/>
    <property type="project" value="InterPro"/>
</dbReference>
<dbReference type="GO" id="GO:0050311">
    <property type="term" value="F:sulfite reductase (ferredoxin) activity"/>
    <property type="evidence" value="ECO:0007669"/>
    <property type="project" value="TreeGrafter"/>
</dbReference>
<dbReference type="GO" id="GO:0004783">
    <property type="term" value="F:sulfite reductase (NADPH) activity"/>
    <property type="evidence" value="ECO:0007669"/>
    <property type="project" value="UniProtKB-UniRule"/>
</dbReference>
<dbReference type="GO" id="GO:0019344">
    <property type="term" value="P:cysteine biosynthetic process"/>
    <property type="evidence" value="ECO:0007669"/>
    <property type="project" value="UniProtKB-KW"/>
</dbReference>
<dbReference type="GO" id="GO:0070814">
    <property type="term" value="P:hydrogen sulfide biosynthetic process"/>
    <property type="evidence" value="ECO:0007669"/>
    <property type="project" value="UniProtKB-UniRule"/>
</dbReference>
<dbReference type="GO" id="GO:0000103">
    <property type="term" value="P:sulfate assimilation"/>
    <property type="evidence" value="ECO:0007669"/>
    <property type="project" value="UniProtKB-UniRule"/>
</dbReference>
<dbReference type="FunFam" id="3.30.413.10:FF:000003">
    <property type="entry name" value="Sulfite reductase [NADPH] hemoprotein beta-component"/>
    <property type="match status" value="1"/>
</dbReference>
<dbReference type="FunFam" id="3.30.413.10:FF:000004">
    <property type="entry name" value="Sulfite reductase [NADPH] hemoprotein beta-component"/>
    <property type="match status" value="1"/>
</dbReference>
<dbReference type="Gene3D" id="3.30.413.10">
    <property type="entry name" value="Sulfite Reductase Hemoprotein, domain 1"/>
    <property type="match status" value="2"/>
</dbReference>
<dbReference type="HAMAP" id="MF_01540">
    <property type="entry name" value="CysI"/>
    <property type="match status" value="1"/>
</dbReference>
<dbReference type="InterPro" id="IPR011786">
    <property type="entry name" value="CysI"/>
</dbReference>
<dbReference type="InterPro" id="IPR005117">
    <property type="entry name" value="NiRdtase/SiRdtase_haem-b_fer"/>
</dbReference>
<dbReference type="InterPro" id="IPR036136">
    <property type="entry name" value="Nit/Sulf_reduc_fer-like_dom_sf"/>
</dbReference>
<dbReference type="InterPro" id="IPR006067">
    <property type="entry name" value="NO2/SO3_Rdtase_4Fe4S_dom"/>
</dbReference>
<dbReference type="InterPro" id="IPR045169">
    <property type="entry name" value="NO2/SO3_Rdtase_4Fe4S_prot"/>
</dbReference>
<dbReference type="InterPro" id="IPR045854">
    <property type="entry name" value="NO2/SO3_Rdtase_4Fe4S_sf"/>
</dbReference>
<dbReference type="InterPro" id="IPR006066">
    <property type="entry name" value="NO2/SO3_Rdtase_FeS/sirohaem_BS"/>
</dbReference>
<dbReference type="NCBIfam" id="TIGR02041">
    <property type="entry name" value="CysI"/>
    <property type="match status" value="1"/>
</dbReference>
<dbReference type="NCBIfam" id="NF010029">
    <property type="entry name" value="PRK13504.1"/>
    <property type="match status" value="1"/>
</dbReference>
<dbReference type="PANTHER" id="PTHR11493:SF47">
    <property type="entry name" value="SULFITE REDUCTASE [NADPH] SUBUNIT BETA"/>
    <property type="match status" value="1"/>
</dbReference>
<dbReference type="PANTHER" id="PTHR11493">
    <property type="entry name" value="SULFITE REDUCTASE [NADPH] SUBUNIT BETA-RELATED"/>
    <property type="match status" value="1"/>
</dbReference>
<dbReference type="Pfam" id="PF01077">
    <property type="entry name" value="NIR_SIR"/>
    <property type="match status" value="1"/>
</dbReference>
<dbReference type="Pfam" id="PF03460">
    <property type="entry name" value="NIR_SIR_ferr"/>
    <property type="match status" value="2"/>
</dbReference>
<dbReference type="PRINTS" id="PR00397">
    <property type="entry name" value="SIROHAEM"/>
</dbReference>
<dbReference type="SUPFAM" id="SSF56014">
    <property type="entry name" value="Nitrite and sulphite reductase 4Fe-4S domain-like"/>
    <property type="match status" value="2"/>
</dbReference>
<dbReference type="SUPFAM" id="SSF55124">
    <property type="entry name" value="Nitrite/Sulfite reductase N-terminal domain-like"/>
    <property type="match status" value="2"/>
</dbReference>
<dbReference type="PROSITE" id="PS00365">
    <property type="entry name" value="NIR_SIR"/>
    <property type="match status" value="1"/>
</dbReference>
<evidence type="ECO:0000255" key="1">
    <source>
        <dbReference type="HAMAP-Rule" id="MF_01540"/>
    </source>
</evidence>
<organism>
    <name type="scientific">Salmonella gallinarum (strain 287/91 / NCTC 13346)</name>
    <dbReference type="NCBI Taxonomy" id="550538"/>
    <lineage>
        <taxon>Bacteria</taxon>
        <taxon>Pseudomonadati</taxon>
        <taxon>Pseudomonadota</taxon>
        <taxon>Gammaproteobacteria</taxon>
        <taxon>Enterobacterales</taxon>
        <taxon>Enterobacteriaceae</taxon>
        <taxon>Salmonella</taxon>
    </lineage>
</organism>
<protein>
    <recommendedName>
        <fullName evidence="1">Sulfite reductase [NADPH] hemoprotein beta-component</fullName>
        <shortName evidence="1">SiR-HP</shortName>
        <shortName evidence="1">SiRHP</shortName>
        <ecNumber evidence="1">1.8.1.2</ecNumber>
    </recommendedName>
</protein>
<keyword id="KW-0004">4Fe-4S</keyword>
<keyword id="KW-0028">Amino-acid biosynthesis</keyword>
<keyword id="KW-0198">Cysteine biosynthesis</keyword>
<keyword id="KW-0349">Heme</keyword>
<keyword id="KW-0408">Iron</keyword>
<keyword id="KW-0411">Iron-sulfur</keyword>
<keyword id="KW-0479">Metal-binding</keyword>
<keyword id="KW-0521">NADP</keyword>
<keyword id="KW-0560">Oxidoreductase</keyword>
<reference key="1">
    <citation type="journal article" date="2008" name="Genome Res.">
        <title>Comparative genome analysis of Salmonella enteritidis PT4 and Salmonella gallinarum 287/91 provides insights into evolutionary and host adaptation pathways.</title>
        <authorList>
            <person name="Thomson N.R."/>
            <person name="Clayton D.J."/>
            <person name="Windhorst D."/>
            <person name="Vernikos G."/>
            <person name="Davidson S."/>
            <person name="Churcher C."/>
            <person name="Quail M.A."/>
            <person name="Stevens M."/>
            <person name="Jones M.A."/>
            <person name="Watson M."/>
            <person name="Barron A."/>
            <person name="Layton A."/>
            <person name="Pickard D."/>
            <person name="Kingsley R.A."/>
            <person name="Bignell A."/>
            <person name="Clark L."/>
            <person name="Harris B."/>
            <person name="Ormond D."/>
            <person name="Abdellah Z."/>
            <person name="Brooks K."/>
            <person name="Cherevach I."/>
            <person name="Chillingworth T."/>
            <person name="Woodward J."/>
            <person name="Norberczak H."/>
            <person name="Lord A."/>
            <person name="Arrowsmith C."/>
            <person name="Jagels K."/>
            <person name="Moule S."/>
            <person name="Mungall K."/>
            <person name="Saunders M."/>
            <person name="Whitehead S."/>
            <person name="Chabalgoity J.A."/>
            <person name="Maskell D."/>
            <person name="Humphreys T."/>
            <person name="Roberts M."/>
            <person name="Barrow P.A."/>
            <person name="Dougan G."/>
            <person name="Parkhill J."/>
        </authorList>
    </citation>
    <scope>NUCLEOTIDE SEQUENCE [LARGE SCALE GENOMIC DNA]</scope>
    <source>
        <strain>287/91 / NCTC 13346</strain>
    </source>
</reference>
<name>CYSI_SALG2</name>
<proteinExistence type="inferred from homology"/>
<sequence>MSEKHPGPLVVEGKLSDAERMKLESNYLRGTIAEDLNDGLTGGFKGDNFLLIRFHGMYQQDDRDIRAERAEQKLEPRHAMLLRCRLPGGVITTTQWQAIDKFAADNTIYGSIRLTNRQTFQFHGILKKNVKPVHQMLHSVGLDALATANDMNRNVLCTSNPYESQLHAEAYEWAKKISEHLLPRTRAYAEIWLDQEKVATTDEEPILGQTYLPRKFKTTVVIPPQNDIDLHANDMNFVAIAENGKLVGFNLLVGGGLSIEHGNKKTYARTASEFGYLPLEHTLAVAEAVVTTQRDWGNRTDRKNAKTKYTLERVGLETFKAEVERRAGIKFEPIRPYEFTGRGDRIGWVKGIDNNWHLTLFIENGRILDYPGRPLKTGLLEIAKIHQGEFRITANQNLIIASVPESQKAKIETLARDHGLMNAVSAQRENSMACVSFPTCPLAMAEAERFLPSFTDKVEAILEKHGIPDEHIVMRVTGCPNGCGRAMLAEIGLVGKAPGRYNLHLGGNRIGTRIPLMYQENITEPDILASLDELIGRWAKEREAGEGFGDFTVRAGIIRPVLDPARDFWE</sequence>
<comment type="function">
    <text evidence="1">Component of the sulfite reductase complex that catalyzes the 6-electron reduction of sulfite to sulfide. This is one of several activities required for the biosynthesis of L-cysteine from sulfate.</text>
</comment>
<comment type="catalytic activity">
    <reaction evidence="1">
        <text>hydrogen sulfide + 3 NADP(+) + 3 H2O = sulfite + 3 NADPH + 4 H(+)</text>
        <dbReference type="Rhea" id="RHEA:13801"/>
        <dbReference type="ChEBI" id="CHEBI:15377"/>
        <dbReference type="ChEBI" id="CHEBI:15378"/>
        <dbReference type="ChEBI" id="CHEBI:17359"/>
        <dbReference type="ChEBI" id="CHEBI:29919"/>
        <dbReference type="ChEBI" id="CHEBI:57783"/>
        <dbReference type="ChEBI" id="CHEBI:58349"/>
        <dbReference type="EC" id="1.8.1.2"/>
    </reaction>
</comment>
<comment type="cofactor">
    <cofactor evidence="1">
        <name>siroheme</name>
        <dbReference type="ChEBI" id="CHEBI:60052"/>
    </cofactor>
    <text evidence="1">Binds 1 siroheme per subunit.</text>
</comment>
<comment type="cofactor">
    <cofactor evidence="1">
        <name>[4Fe-4S] cluster</name>
        <dbReference type="ChEBI" id="CHEBI:49883"/>
    </cofactor>
    <text evidence="1">Binds 1 [4Fe-4S] cluster per subunit.</text>
</comment>
<comment type="pathway">
    <text evidence="1">Sulfur metabolism; hydrogen sulfide biosynthesis; hydrogen sulfide from sulfite (NADPH route): step 1/1.</text>
</comment>
<comment type="subunit">
    <text evidence="1">Alpha(8)-beta(8). The alpha component is a flavoprotein, the beta component is a hemoprotein.</text>
</comment>
<comment type="similarity">
    <text evidence="1">Belongs to the nitrite and sulfite reductase 4Fe-4S domain family.</text>
</comment>
<accession>B5RDS0</accession>